<gene>
    <name type="ordered locus">MJ1564</name>
</gene>
<organism>
    <name type="scientific">Methanocaldococcus jannaschii (strain ATCC 43067 / DSM 2661 / JAL-1 / JCM 10045 / NBRC 100440)</name>
    <name type="common">Methanococcus jannaschii</name>
    <dbReference type="NCBI Taxonomy" id="243232"/>
    <lineage>
        <taxon>Archaea</taxon>
        <taxon>Methanobacteriati</taxon>
        <taxon>Methanobacteriota</taxon>
        <taxon>Methanomada group</taxon>
        <taxon>Methanococci</taxon>
        <taxon>Methanococcales</taxon>
        <taxon>Methanocaldococcaceae</taxon>
        <taxon>Methanocaldococcus</taxon>
    </lineage>
</organism>
<proteinExistence type="evidence at protein level"/>
<sequence length="170" mass="19330">MEVIIKAKVKPTEDKYKVKKAILNIFPKAKLTFIEKDNEFGEWEGKTKSVEKLKELLRSQSILDAARMVLEKGMTENATKFYLNKQAAYVGAVNFDIDTHGGIFVKILADENEDIMKIIKDIAPRTKGGVIINEDELEEEEEKEDSEEIKEGHKEENNLKIKVIDNSSGD</sequence>
<feature type="chain" id="PRO_0000094510" description="UPF0201 protein MJ1564">
    <location>
        <begin position="1"/>
        <end position="170"/>
    </location>
</feature>
<feature type="region of interest" description="Disordered" evidence="1">
    <location>
        <begin position="133"/>
        <end position="170"/>
    </location>
</feature>
<feature type="compositionally biased region" description="Acidic residues" evidence="1">
    <location>
        <begin position="133"/>
        <end position="148"/>
    </location>
</feature>
<feature type="compositionally biased region" description="Basic and acidic residues" evidence="1">
    <location>
        <begin position="149"/>
        <end position="163"/>
    </location>
</feature>
<feature type="strand" evidence="3">
    <location>
        <begin position="2"/>
        <end position="9"/>
    </location>
</feature>
<feature type="helix" evidence="3">
    <location>
        <begin position="15"/>
        <end position="25"/>
    </location>
</feature>
<feature type="strand" evidence="3">
    <location>
        <begin position="30"/>
        <end position="35"/>
    </location>
</feature>
<feature type="strand" evidence="3">
    <location>
        <begin position="41"/>
        <end position="48"/>
    </location>
</feature>
<feature type="helix" evidence="3">
    <location>
        <begin position="51"/>
        <end position="59"/>
    </location>
</feature>
<feature type="helix" evidence="3">
    <location>
        <begin position="63"/>
        <end position="72"/>
    </location>
</feature>
<feature type="strand" evidence="3">
    <location>
        <begin position="76"/>
        <end position="83"/>
    </location>
</feature>
<feature type="helix" evidence="3">
    <location>
        <begin position="85"/>
        <end position="89"/>
    </location>
</feature>
<feature type="strand" evidence="3">
    <location>
        <begin position="103"/>
        <end position="108"/>
    </location>
</feature>
<feature type="helix" evidence="3">
    <location>
        <begin position="115"/>
        <end position="122"/>
    </location>
</feature>
<feature type="strand" evidence="3">
    <location>
        <begin position="126"/>
        <end position="129"/>
    </location>
</feature>
<evidence type="ECO:0000256" key="1">
    <source>
        <dbReference type="SAM" id="MobiDB-lite"/>
    </source>
</evidence>
<evidence type="ECO:0000305" key="2"/>
<evidence type="ECO:0007829" key="3">
    <source>
        <dbReference type="PDB" id="2PZZ"/>
    </source>
</evidence>
<comment type="similarity">
    <text evidence="2">Belongs to the UPF0201 family.</text>
</comment>
<dbReference type="EMBL" id="L77117">
    <property type="protein sequence ID" value="AAB99591.1"/>
    <property type="molecule type" value="Genomic_DNA"/>
</dbReference>
<dbReference type="PIR" id="C64495">
    <property type="entry name" value="C64495"/>
</dbReference>
<dbReference type="RefSeq" id="WP_010871088.1">
    <property type="nucleotide sequence ID" value="NC_000909.1"/>
</dbReference>
<dbReference type="PDB" id="2PZZ">
    <property type="method" value="X-ray"/>
    <property type="resolution" value="2.20 A"/>
    <property type="chains" value="A/B/C/D=2-139"/>
</dbReference>
<dbReference type="PDBsum" id="2PZZ"/>
<dbReference type="SMR" id="Q58959"/>
<dbReference type="STRING" id="243232.MJ_1564"/>
<dbReference type="PaxDb" id="243232-MJ_1564"/>
<dbReference type="EnsemblBacteria" id="AAB99591">
    <property type="protein sequence ID" value="AAB99591"/>
    <property type="gene ID" value="MJ_1564"/>
</dbReference>
<dbReference type="GeneID" id="1452472"/>
<dbReference type="KEGG" id="mja:MJ_1564"/>
<dbReference type="eggNOG" id="arCOG01043">
    <property type="taxonomic scope" value="Archaea"/>
</dbReference>
<dbReference type="HOGENOM" id="CLU_134829_0_0_2"/>
<dbReference type="InParanoid" id="Q58959"/>
<dbReference type="OrthoDB" id="7819at2157"/>
<dbReference type="PhylomeDB" id="Q58959"/>
<dbReference type="EvolutionaryTrace" id="Q58959"/>
<dbReference type="Proteomes" id="UP000000805">
    <property type="component" value="Chromosome"/>
</dbReference>
<dbReference type="Gene3D" id="3.30.1440.10">
    <property type="match status" value="1"/>
</dbReference>
<dbReference type="HAMAP" id="MF_01112">
    <property type="entry name" value="UPF0201"/>
    <property type="match status" value="1"/>
</dbReference>
<dbReference type="InterPro" id="IPR002739">
    <property type="entry name" value="PAB1135-like"/>
</dbReference>
<dbReference type="InterPro" id="IPR022803">
    <property type="entry name" value="Ribosomal_uL5_dom_sf"/>
</dbReference>
<dbReference type="PANTHER" id="PTHR39652">
    <property type="entry name" value="UPF0201 PROTEIN TK1335"/>
    <property type="match status" value="1"/>
</dbReference>
<dbReference type="PANTHER" id="PTHR39652:SF1">
    <property type="entry name" value="UPF0201 PROTEIN TK1335"/>
    <property type="match status" value="1"/>
</dbReference>
<dbReference type="Pfam" id="PF01877">
    <property type="entry name" value="RNA_binding"/>
    <property type="match status" value="1"/>
</dbReference>
<dbReference type="SUPFAM" id="SSF55282">
    <property type="entry name" value="RL5-like"/>
    <property type="match status" value="1"/>
</dbReference>
<protein>
    <recommendedName>
        <fullName>UPF0201 protein MJ1564</fullName>
    </recommendedName>
</protein>
<reference key="1">
    <citation type="journal article" date="1996" name="Science">
        <title>Complete genome sequence of the methanogenic archaeon, Methanococcus jannaschii.</title>
        <authorList>
            <person name="Bult C.J."/>
            <person name="White O."/>
            <person name="Olsen G.J."/>
            <person name="Zhou L."/>
            <person name="Fleischmann R.D."/>
            <person name="Sutton G.G."/>
            <person name="Blake J.A."/>
            <person name="FitzGerald L.M."/>
            <person name="Clayton R.A."/>
            <person name="Gocayne J.D."/>
            <person name="Kerlavage A.R."/>
            <person name="Dougherty B.A."/>
            <person name="Tomb J.-F."/>
            <person name="Adams M.D."/>
            <person name="Reich C.I."/>
            <person name="Overbeek R."/>
            <person name="Kirkness E.F."/>
            <person name="Weinstock K.G."/>
            <person name="Merrick J.M."/>
            <person name="Glodek A."/>
            <person name="Scott J.L."/>
            <person name="Geoghagen N.S.M."/>
            <person name="Weidman J.F."/>
            <person name="Fuhrmann J.L."/>
            <person name="Nguyen D."/>
            <person name="Utterback T.R."/>
            <person name="Kelley J.M."/>
            <person name="Peterson J.D."/>
            <person name="Sadow P.W."/>
            <person name="Hanna M.C."/>
            <person name="Cotton M.D."/>
            <person name="Roberts K.M."/>
            <person name="Hurst M.A."/>
            <person name="Kaine B.P."/>
            <person name="Borodovsky M."/>
            <person name="Klenk H.-P."/>
            <person name="Fraser C.M."/>
            <person name="Smith H.O."/>
            <person name="Woese C.R."/>
            <person name="Venter J.C."/>
        </authorList>
    </citation>
    <scope>NUCLEOTIDE SEQUENCE [LARGE SCALE GENOMIC DNA]</scope>
    <source>
        <strain>ATCC 43067 / DSM 2661 / JAL-1 / JCM 10045 / NBRC 100440</strain>
    </source>
</reference>
<keyword id="KW-0002">3D-structure</keyword>
<keyword id="KW-1185">Reference proteome</keyword>
<accession>Q58959</accession>
<name>Y1564_METJA</name>